<evidence type="ECO:0000255" key="1">
    <source>
        <dbReference type="HAMAP-Rule" id="MF_00649"/>
    </source>
</evidence>
<name>YACG_NEIMB</name>
<dbReference type="EMBL" id="AE002098">
    <property type="protein sequence ID" value="AAF40774.1"/>
    <property type="molecule type" value="Genomic_DNA"/>
</dbReference>
<dbReference type="PIR" id="F81210">
    <property type="entry name" value="F81210"/>
</dbReference>
<dbReference type="RefSeq" id="NP_273379.1">
    <property type="nucleotide sequence ID" value="NC_003112.2"/>
</dbReference>
<dbReference type="RefSeq" id="WP_002224872.1">
    <property type="nucleotide sequence ID" value="NC_003112.2"/>
</dbReference>
<dbReference type="SMR" id="Q9K155"/>
<dbReference type="FunCoup" id="Q9K155">
    <property type="interactions" value="51"/>
</dbReference>
<dbReference type="STRING" id="122586.NMB0330"/>
<dbReference type="PaxDb" id="122586-NMB0330"/>
<dbReference type="KEGG" id="nme:NMB0330"/>
<dbReference type="PATRIC" id="fig|122586.8.peg.418"/>
<dbReference type="HOGENOM" id="CLU_178280_3_2_4"/>
<dbReference type="InParanoid" id="Q9K155"/>
<dbReference type="OrthoDB" id="9809663at2"/>
<dbReference type="Proteomes" id="UP000000425">
    <property type="component" value="Chromosome"/>
</dbReference>
<dbReference type="GO" id="GO:0008657">
    <property type="term" value="F:DNA topoisomerase type II (double strand cut, ATP-hydrolyzing) inhibitor activity"/>
    <property type="evidence" value="ECO:0000318"/>
    <property type="project" value="GO_Central"/>
</dbReference>
<dbReference type="GO" id="GO:0008270">
    <property type="term" value="F:zinc ion binding"/>
    <property type="evidence" value="ECO:0007669"/>
    <property type="project" value="UniProtKB-UniRule"/>
</dbReference>
<dbReference type="GO" id="GO:0006355">
    <property type="term" value="P:regulation of DNA-templated transcription"/>
    <property type="evidence" value="ECO:0007669"/>
    <property type="project" value="InterPro"/>
</dbReference>
<dbReference type="Gene3D" id="3.30.50.10">
    <property type="entry name" value="Erythroid Transcription Factor GATA-1, subunit A"/>
    <property type="match status" value="1"/>
</dbReference>
<dbReference type="HAMAP" id="MF_00649">
    <property type="entry name" value="DNA_gyrase_inhibitor_YacG"/>
    <property type="match status" value="1"/>
</dbReference>
<dbReference type="InterPro" id="IPR005584">
    <property type="entry name" value="DNA_gyrase_inhibitor_YacG"/>
</dbReference>
<dbReference type="InterPro" id="IPR013088">
    <property type="entry name" value="Znf_NHR/GATA"/>
</dbReference>
<dbReference type="PANTHER" id="PTHR36150">
    <property type="entry name" value="DNA GYRASE INHIBITOR YACG"/>
    <property type="match status" value="1"/>
</dbReference>
<dbReference type="PANTHER" id="PTHR36150:SF1">
    <property type="entry name" value="DNA GYRASE INHIBITOR YACG"/>
    <property type="match status" value="1"/>
</dbReference>
<dbReference type="Pfam" id="PF03884">
    <property type="entry name" value="YacG"/>
    <property type="match status" value="1"/>
</dbReference>
<dbReference type="SUPFAM" id="SSF57716">
    <property type="entry name" value="Glucocorticoid receptor-like (DNA-binding domain)"/>
    <property type="match status" value="1"/>
</dbReference>
<sequence length="69" mass="7841">MTESRQTRLQVKCPTCQTAVVWKPENAFRPFCSQRCKLIDLGGWADGKYTVSGQTESLPEISEPDMAYR</sequence>
<comment type="function">
    <text evidence="1">Inhibits all the catalytic activities of DNA gyrase by preventing its interaction with DNA. Acts by binding directly to the C-terminal domain of GyrB, which probably disrupts DNA binding by the gyrase.</text>
</comment>
<comment type="cofactor">
    <cofactor evidence="1">
        <name>Zn(2+)</name>
        <dbReference type="ChEBI" id="CHEBI:29105"/>
    </cofactor>
    <text evidence="1">Binds 1 zinc ion.</text>
</comment>
<comment type="subunit">
    <text evidence="1">Interacts with GyrB.</text>
</comment>
<comment type="similarity">
    <text evidence="1">Belongs to the DNA gyrase inhibitor YacG family.</text>
</comment>
<feature type="chain" id="PRO_0000211711" description="DNA gyrase inhibitor YacG">
    <location>
        <begin position="1"/>
        <end position="69"/>
    </location>
</feature>
<feature type="binding site" evidence="1">
    <location>
        <position position="13"/>
    </location>
    <ligand>
        <name>Zn(2+)</name>
        <dbReference type="ChEBI" id="CHEBI:29105"/>
    </ligand>
</feature>
<feature type="binding site" evidence="1">
    <location>
        <position position="16"/>
    </location>
    <ligand>
        <name>Zn(2+)</name>
        <dbReference type="ChEBI" id="CHEBI:29105"/>
    </ligand>
</feature>
<feature type="binding site" evidence="1">
    <location>
        <position position="32"/>
    </location>
    <ligand>
        <name>Zn(2+)</name>
        <dbReference type="ChEBI" id="CHEBI:29105"/>
    </ligand>
</feature>
<feature type="binding site" evidence="1">
    <location>
        <position position="36"/>
    </location>
    <ligand>
        <name>Zn(2+)</name>
        <dbReference type="ChEBI" id="CHEBI:29105"/>
    </ligand>
</feature>
<organism>
    <name type="scientific">Neisseria meningitidis serogroup B (strain ATCC BAA-335 / MC58)</name>
    <dbReference type="NCBI Taxonomy" id="122586"/>
    <lineage>
        <taxon>Bacteria</taxon>
        <taxon>Pseudomonadati</taxon>
        <taxon>Pseudomonadota</taxon>
        <taxon>Betaproteobacteria</taxon>
        <taxon>Neisseriales</taxon>
        <taxon>Neisseriaceae</taxon>
        <taxon>Neisseria</taxon>
    </lineage>
</organism>
<gene>
    <name evidence="1" type="primary">yacG</name>
    <name type="ordered locus">NMB0330</name>
</gene>
<accession>Q9K155</accession>
<proteinExistence type="inferred from homology"/>
<reference key="1">
    <citation type="journal article" date="2000" name="Science">
        <title>Complete genome sequence of Neisseria meningitidis serogroup B strain MC58.</title>
        <authorList>
            <person name="Tettelin H."/>
            <person name="Saunders N.J."/>
            <person name="Heidelberg J.F."/>
            <person name="Jeffries A.C."/>
            <person name="Nelson K.E."/>
            <person name="Eisen J.A."/>
            <person name="Ketchum K.A."/>
            <person name="Hood D.W."/>
            <person name="Peden J.F."/>
            <person name="Dodson R.J."/>
            <person name="Nelson W.C."/>
            <person name="Gwinn M.L."/>
            <person name="DeBoy R.T."/>
            <person name="Peterson J.D."/>
            <person name="Hickey E.K."/>
            <person name="Haft D.H."/>
            <person name="Salzberg S.L."/>
            <person name="White O."/>
            <person name="Fleischmann R.D."/>
            <person name="Dougherty B.A."/>
            <person name="Mason T.M."/>
            <person name="Ciecko A."/>
            <person name="Parksey D.S."/>
            <person name="Blair E."/>
            <person name="Cittone H."/>
            <person name="Clark E.B."/>
            <person name="Cotton M.D."/>
            <person name="Utterback T.R."/>
            <person name="Khouri H.M."/>
            <person name="Qin H."/>
            <person name="Vamathevan J.J."/>
            <person name="Gill J."/>
            <person name="Scarlato V."/>
            <person name="Masignani V."/>
            <person name="Pizza M."/>
            <person name="Grandi G."/>
            <person name="Sun L."/>
            <person name="Smith H.O."/>
            <person name="Fraser C.M."/>
            <person name="Moxon E.R."/>
            <person name="Rappuoli R."/>
            <person name="Venter J.C."/>
        </authorList>
    </citation>
    <scope>NUCLEOTIDE SEQUENCE [LARGE SCALE GENOMIC DNA]</scope>
    <source>
        <strain>ATCC BAA-335 / MC58</strain>
    </source>
</reference>
<protein>
    <recommendedName>
        <fullName evidence="1">DNA gyrase inhibitor YacG</fullName>
    </recommendedName>
</protein>
<keyword id="KW-0479">Metal-binding</keyword>
<keyword id="KW-1185">Reference proteome</keyword>
<keyword id="KW-0862">Zinc</keyword>